<proteinExistence type="inferred from homology"/>
<gene>
    <name evidence="2" type="primary">cysN</name>
    <name type="ordered locus">ETA_27050</name>
</gene>
<sequence length="476" mass="52328">MNNIIAQQIADQGGVEAWLHAQQHKSLLRFLTCGSVDDGKSTLIGRLLHDTRQIYEDQLSSLHNDSKRHGTQGEKLDLALLVDGLQAEREQGITIDVAYRYFSTEKRKFIIADTPGHEQYTRNMATGASTCDLAILLIDARKGVLDQTRRHSFISTLLGIKHLVVAINKMDLVDYSQATFEQIKQDYLDFATQLPGNLDIRFVPLSALEGENVAAPSGHMGWYSGPTLLDVLETVEVQRVVEQQPMRFPVQYVNRPNLDFRGYAGTLASGSVQVGQRVKVLPSGVESSIARIVTFDGDLQQAAAGEAITLVLKDEIDISRGDLLVDASAELTPVRAATVDVVWMAEQPLAPGQSFDVKIAGKKTRARVKGIQHQVEINSLTQHSIAELPLNAIGLVDIVFDEPMVLDSYQQNPVTGGMIFIDRLSNVTVGAGMIRQPLAEETAAGSTDFSAFELELNALVRRHFPHWNARDLLGGK</sequence>
<feature type="chain" id="PRO_1000092141" description="Sulfate adenylyltransferase subunit 1">
    <location>
        <begin position="1"/>
        <end position="476"/>
    </location>
</feature>
<feature type="domain" description="tr-type G">
    <location>
        <begin position="25"/>
        <end position="241"/>
    </location>
</feature>
<feature type="region of interest" description="G1" evidence="1">
    <location>
        <begin position="34"/>
        <end position="41"/>
    </location>
</feature>
<feature type="region of interest" description="G2" evidence="1">
    <location>
        <begin position="92"/>
        <end position="96"/>
    </location>
</feature>
<feature type="region of interest" description="G3" evidence="1">
    <location>
        <begin position="113"/>
        <end position="116"/>
    </location>
</feature>
<feature type="region of interest" description="G4" evidence="1">
    <location>
        <begin position="168"/>
        <end position="171"/>
    </location>
</feature>
<feature type="region of interest" description="G5" evidence="1">
    <location>
        <begin position="206"/>
        <end position="208"/>
    </location>
</feature>
<feature type="binding site" evidence="2">
    <location>
        <begin position="34"/>
        <end position="41"/>
    </location>
    <ligand>
        <name>GTP</name>
        <dbReference type="ChEBI" id="CHEBI:37565"/>
    </ligand>
</feature>
<feature type="binding site" evidence="2">
    <location>
        <begin position="113"/>
        <end position="117"/>
    </location>
    <ligand>
        <name>GTP</name>
        <dbReference type="ChEBI" id="CHEBI:37565"/>
    </ligand>
</feature>
<feature type="binding site" evidence="2">
    <location>
        <begin position="168"/>
        <end position="171"/>
    </location>
    <ligand>
        <name>GTP</name>
        <dbReference type="ChEBI" id="CHEBI:37565"/>
    </ligand>
</feature>
<dbReference type="EC" id="2.7.7.4" evidence="2"/>
<dbReference type="EMBL" id="CU468135">
    <property type="protein sequence ID" value="CAO97751.1"/>
    <property type="molecule type" value="Genomic_DNA"/>
</dbReference>
<dbReference type="RefSeq" id="WP_012442408.1">
    <property type="nucleotide sequence ID" value="NC_010694.1"/>
</dbReference>
<dbReference type="SMR" id="B2VG01"/>
<dbReference type="STRING" id="465817.ETA_27050"/>
<dbReference type="KEGG" id="eta:ETA_27050"/>
<dbReference type="eggNOG" id="COG2895">
    <property type="taxonomic scope" value="Bacteria"/>
</dbReference>
<dbReference type="HOGENOM" id="CLU_007265_5_2_6"/>
<dbReference type="OrthoDB" id="9804504at2"/>
<dbReference type="UniPathway" id="UPA00140">
    <property type="reaction ID" value="UER00204"/>
</dbReference>
<dbReference type="Proteomes" id="UP000001726">
    <property type="component" value="Chromosome"/>
</dbReference>
<dbReference type="GO" id="GO:0005524">
    <property type="term" value="F:ATP binding"/>
    <property type="evidence" value="ECO:0007669"/>
    <property type="project" value="UniProtKB-KW"/>
</dbReference>
<dbReference type="GO" id="GO:0005525">
    <property type="term" value="F:GTP binding"/>
    <property type="evidence" value="ECO:0007669"/>
    <property type="project" value="UniProtKB-UniRule"/>
</dbReference>
<dbReference type="GO" id="GO:0003924">
    <property type="term" value="F:GTPase activity"/>
    <property type="evidence" value="ECO:0007669"/>
    <property type="project" value="InterPro"/>
</dbReference>
<dbReference type="GO" id="GO:0004781">
    <property type="term" value="F:sulfate adenylyltransferase (ATP) activity"/>
    <property type="evidence" value="ECO:0007669"/>
    <property type="project" value="UniProtKB-UniRule"/>
</dbReference>
<dbReference type="GO" id="GO:0070814">
    <property type="term" value="P:hydrogen sulfide biosynthetic process"/>
    <property type="evidence" value="ECO:0007669"/>
    <property type="project" value="UniProtKB-UniRule"/>
</dbReference>
<dbReference type="GO" id="GO:0000103">
    <property type="term" value="P:sulfate assimilation"/>
    <property type="evidence" value="ECO:0007669"/>
    <property type="project" value="UniProtKB-UniRule"/>
</dbReference>
<dbReference type="CDD" id="cd04166">
    <property type="entry name" value="CysN_ATPS"/>
    <property type="match status" value="1"/>
</dbReference>
<dbReference type="CDD" id="cd03695">
    <property type="entry name" value="CysN_NodQ_II"/>
    <property type="match status" value="1"/>
</dbReference>
<dbReference type="CDD" id="cd04095">
    <property type="entry name" value="CysN_NoDQ_III"/>
    <property type="match status" value="1"/>
</dbReference>
<dbReference type="FunFam" id="2.40.30.10:FF:000027">
    <property type="entry name" value="Sulfate adenylyltransferase subunit 1"/>
    <property type="match status" value="1"/>
</dbReference>
<dbReference type="FunFam" id="2.40.30.10:FF:000031">
    <property type="entry name" value="Sulfate adenylyltransferase subunit 1"/>
    <property type="match status" value="1"/>
</dbReference>
<dbReference type="FunFam" id="3.40.50.300:FF:000119">
    <property type="entry name" value="Sulfate adenylyltransferase subunit 1"/>
    <property type="match status" value="1"/>
</dbReference>
<dbReference type="Gene3D" id="3.40.50.300">
    <property type="entry name" value="P-loop containing nucleotide triphosphate hydrolases"/>
    <property type="match status" value="1"/>
</dbReference>
<dbReference type="Gene3D" id="2.40.30.10">
    <property type="entry name" value="Translation factors"/>
    <property type="match status" value="2"/>
</dbReference>
<dbReference type="HAMAP" id="MF_00062">
    <property type="entry name" value="Sulf_adenylyltr_sub1"/>
    <property type="match status" value="1"/>
</dbReference>
<dbReference type="InterPro" id="IPR041757">
    <property type="entry name" value="CysN_GTP-bd"/>
</dbReference>
<dbReference type="InterPro" id="IPR044138">
    <property type="entry name" value="CysN_II"/>
</dbReference>
<dbReference type="InterPro" id="IPR044139">
    <property type="entry name" value="CysN_NoDQ_III"/>
</dbReference>
<dbReference type="InterPro" id="IPR031157">
    <property type="entry name" value="G_TR_CS"/>
</dbReference>
<dbReference type="InterPro" id="IPR054696">
    <property type="entry name" value="GTP-eEF1A_C"/>
</dbReference>
<dbReference type="InterPro" id="IPR027417">
    <property type="entry name" value="P-loop_NTPase"/>
</dbReference>
<dbReference type="InterPro" id="IPR005225">
    <property type="entry name" value="Small_GTP-bd"/>
</dbReference>
<dbReference type="InterPro" id="IPR011779">
    <property type="entry name" value="SO4_adenylTrfase_lsu"/>
</dbReference>
<dbReference type="InterPro" id="IPR000795">
    <property type="entry name" value="T_Tr_GTP-bd_dom"/>
</dbReference>
<dbReference type="InterPro" id="IPR050100">
    <property type="entry name" value="TRAFAC_GTPase_members"/>
</dbReference>
<dbReference type="InterPro" id="IPR009000">
    <property type="entry name" value="Transl_B-barrel_sf"/>
</dbReference>
<dbReference type="InterPro" id="IPR009001">
    <property type="entry name" value="Transl_elong_EF1A/Init_IF2_C"/>
</dbReference>
<dbReference type="NCBIfam" id="TIGR02034">
    <property type="entry name" value="CysN"/>
    <property type="match status" value="1"/>
</dbReference>
<dbReference type="NCBIfam" id="NF003478">
    <property type="entry name" value="PRK05124.1"/>
    <property type="match status" value="1"/>
</dbReference>
<dbReference type="NCBIfam" id="TIGR00231">
    <property type="entry name" value="small_GTP"/>
    <property type="match status" value="1"/>
</dbReference>
<dbReference type="PANTHER" id="PTHR23115">
    <property type="entry name" value="TRANSLATION FACTOR"/>
    <property type="match status" value="1"/>
</dbReference>
<dbReference type="Pfam" id="PF22594">
    <property type="entry name" value="GTP-eEF1A_C"/>
    <property type="match status" value="1"/>
</dbReference>
<dbReference type="Pfam" id="PF00009">
    <property type="entry name" value="GTP_EFTU"/>
    <property type="match status" value="1"/>
</dbReference>
<dbReference type="PRINTS" id="PR00315">
    <property type="entry name" value="ELONGATNFCT"/>
</dbReference>
<dbReference type="SUPFAM" id="SSF50465">
    <property type="entry name" value="EF-Tu/eEF-1alpha/eIF2-gamma C-terminal domain"/>
    <property type="match status" value="1"/>
</dbReference>
<dbReference type="SUPFAM" id="SSF52540">
    <property type="entry name" value="P-loop containing nucleoside triphosphate hydrolases"/>
    <property type="match status" value="1"/>
</dbReference>
<dbReference type="SUPFAM" id="SSF50447">
    <property type="entry name" value="Translation proteins"/>
    <property type="match status" value="1"/>
</dbReference>
<dbReference type="PROSITE" id="PS00301">
    <property type="entry name" value="G_TR_1"/>
    <property type="match status" value="1"/>
</dbReference>
<dbReference type="PROSITE" id="PS51722">
    <property type="entry name" value="G_TR_2"/>
    <property type="match status" value="1"/>
</dbReference>
<reference key="1">
    <citation type="journal article" date="2008" name="Environ. Microbiol.">
        <title>The genome of Erwinia tasmaniensis strain Et1/99, a non-pathogenic bacterium in the genus Erwinia.</title>
        <authorList>
            <person name="Kube M."/>
            <person name="Migdoll A.M."/>
            <person name="Mueller I."/>
            <person name="Kuhl H."/>
            <person name="Beck A."/>
            <person name="Reinhardt R."/>
            <person name="Geider K."/>
        </authorList>
    </citation>
    <scope>NUCLEOTIDE SEQUENCE [LARGE SCALE GENOMIC DNA]</scope>
    <source>
        <strain>DSM 17950 / CFBP 7177 / CIP 109463 / NCPPB 4357 / Et1/99</strain>
    </source>
</reference>
<accession>B2VG01</accession>
<protein>
    <recommendedName>
        <fullName evidence="2">Sulfate adenylyltransferase subunit 1</fullName>
        <ecNumber evidence="2">2.7.7.4</ecNumber>
    </recommendedName>
    <alternativeName>
        <fullName evidence="2">ATP-sulfurylase large subunit</fullName>
    </alternativeName>
    <alternativeName>
        <fullName evidence="2">Sulfate adenylate transferase</fullName>
        <shortName evidence="2">SAT</shortName>
    </alternativeName>
</protein>
<name>CYSN_ERWT9</name>
<evidence type="ECO:0000250" key="1"/>
<evidence type="ECO:0000255" key="2">
    <source>
        <dbReference type="HAMAP-Rule" id="MF_00062"/>
    </source>
</evidence>
<comment type="function">
    <text evidence="2">With CysD forms the ATP sulfurylase (ATPS) that catalyzes the adenylation of sulfate producing adenosine 5'-phosphosulfate (APS) and diphosphate, the first enzymatic step in sulfur assimilation pathway. APS synthesis involves the formation of a high-energy phosphoric-sulfuric acid anhydride bond driven by GTP hydrolysis by CysN coupled to ATP hydrolysis by CysD.</text>
</comment>
<comment type="catalytic activity">
    <reaction evidence="2">
        <text>sulfate + ATP + H(+) = adenosine 5'-phosphosulfate + diphosphate</text>
        <dbReference type="Rhea" id="RHEA:18133"/>
        <dbReference type="ChEBI" id="CHEBI:15378"/>
        <dbReference type="ChEBI" id="CHEBI:16189"/>
        <dbReference type="ChEBI" id="CHEBI:30616"/>
        <dbReference type="ChEBI" id="CHEBI:33019"/>
        <dbReference type="ChEBI" id="CHEBI:58243"/>
        <dbReference type="EC" id="2.7.7.4"/>
    </reaction>
</comment>
<comment type="pathway">
    <text evidence="2">Sulfur metabolism; hydrogen sulfide biosynthesis; sulfite from sulfate: step 1/3.</text>
</comment>
<comment type="subunit">
    <text evidence="2">Heterodimer composed of CysD, the smaller subunit, and CysN.</text>
</comment>
<comment type="similarity">
    <text evidence="2">Belongs to the TRAFAC class translation factor GTPase superfamily. Classic translation factor GTPase family. CysN/NodQ subfamily.</text>
</comment>
<organism>
    <name type="scientific">Erwinia tasmaniensis (strain DSM 17950 / CFBP 7177 / CIP 109463 / NCPPB 4357 / Et1/99)</name>
    <dbReference type="NCBI Taxonomy" id="465817"/>
    <lineage>
        <taxon>Bacteria</taxon>
        <taxon>Pseudomonadati</taxon>
        <taxon>Pseudomonadota</taxon>
        <taxon>Gammaproteobacteria</taxon>
        <taxon>Enterobacterales</taxon>
        <taxon>Erwiniaceae</taxon>
        <taxon>Erwinia</taxon>
    </lineage>
</organism>
<keyword id="KW-0067">ATP-binding</keyword>
<keyword id="KW-0342">GTP-binding</keyword>
<keyword id="KW-0547">Nucleotide-binding</keyword>
<keyword id="KW-0548">Nucleotidyltransferase</keyword>
<keyword id="KW-1185">Reference proteome</keyword>
<keyword id="KW-0808">Transferase</keyword>